<keyword id="KW-0067">ATP-binding</keyword>
<keyword id="KW-0131">Cell cycle</keyword>
<keyword id="KW-0132">Cell division</keyword>
<keyword id="KW-0997">Cell inner membrane</keyword>
<keyword id="KW-1003">Cell membrane</keyword>
<keyword id="KW-0159">Chromosome partition</keyword>
<keyword id="KW-0238">DNA-binding</keyword>
<keyword id="KW-0472">Membrane</keyword>
<keyword id="KW-0547">Nucleotide-binding</keyword>
<keyword id="KW-1185">Reference proteome</keyword>
<keyword id="KW-0812">Transmembrane</keyword>
<keyword id="KW-1133">Transmembrane helix</keyword>
<feature type="chain" id="PRO_0000098259" description="DNA translocase FtsK">
    <location>
        <begin position="1"/>
        <end position="1347"/>
    </location>
</feature>
<feature type="topological domain" description="Cytoplasmic" evidence="2">
    <location>
        <begin position="1"/>
        <end position="24"/>
    </location>
</feature>
<feature type="transmembrane region" description="Helical" evidence="2">
    <location>
        <begin position="25"/>
        <end position="44"/>
    </location>
</feature>
<feature type="topological domain" description="Periplasmic" evidence="2">
    <location>
        <begin position="45"/>
        <end position="74"/>
    </location>
</feature>
<feature type="transmembrane region" description="Helical" evidence="2">
    <location>
        <begin position="75"/>
        <end position="98"/>
    </location>
</feature>
<feature type="topological domain" description="Cytoplasmic" evidence="2">
    <location>
        <begin position="99"/>
        <end position="115"/>
    </location>
</feature>
<feature type="transmembrane region" description="Helical" evidence="2">
    <location>
        <begin position="116"/>
        <end position="132"/>
    </location>
</feature>
<feature type="topological domain" description="Periplasmic" evidence="2">
    <location>
        <begin position="133"/>
        <end position="162"/>
    </location>
</feature>
<feature type="transmembrane region" description="Helical" evidence="2">
    <location>
        <begin position="163"/>
        <end position="179"/>
    </location>
</feature>
<feature type="topological domain" description="Cytoplasmic" evidence="2">
    <location>
        <begin position="180"/>
        <end position="1347"/>
    </location>
</feature>
<feature type="domain" description="FtsK" evidence="3">
    <location>
        <begin position="992"/>
        <end position="1205"/>
    </location>
</feature>
<feature type="region of interest" description="Disordered" evidence="4">
    <location>
        <begin position="354"/>
        <end position="384"/>
    </location>
</feature>
<feature type="region of interest" description="Disordered" evidence="4">
    <location>
        <begin position="434"/>
        <end position="502"/>
    </location>
</feature>
<feature type="region of interest" description="Disordered" evidence="4">
    <location>
        <begin position="589"/>
        <end position="725"/>
    </location>
</feature>
<feature type="region of interest" description="Disordered" evidence="4">
    <location>
        <begin position="754"/>
        <end position="867"/>
    </location>
</feature>
<feature type="compositionally biased region" description="Low complexity" evidence="4">
    <location>
        <begin position="434"/>
        <end position="443"/>
    </location>
</feature>
<feature type="compositionally biased region" description="Polar residues" evidence="4">
    <location>
        <begin position="450"/>
        <end position="461"/>
    </location>
</feature>
<feature type="compositionally biased region" description="Low complexity" evidence="4">
    <location>
        <begin position="462"/>
        <end position="493"/>
    </location>
</feature>
<feature type="compositionally biased region" description="Basic and acidic residues" evidence="4">
    <location>
        <begin position="632"/>
        <end position="641"/>
    </location>
</feature>
<feature type="compositionally biased region" description="Low complexity" evidence="4">
    <location>
        <begin position="670"/>
        <end position="679"/>
    </location>
</feature>
<feature type="compositionally biased region" description="Polar residues" evidence="4">
    <location>
        <begin position="703"/>
        <end position="712"/>
    </location>
</feature>
<feature type="compositionally biased region" description="Low complexity" evidence="4">
    <location>
        <begin position="754"/>
        <end position="834"/>
    </location>
</feature>
<feature type="compositionally biased region" description="Low complexity" evidence="4">
    <location>
        <begin position="854"/>
        <end position="864"/>
    </location>
</feature>
<feature type="binding site" evidence="3">
    <location>
        <begin position="1012"/>
        <end position="1017"/>
    </location>
    <ligand>
        <name>ATP</name>
        <dbReference type="ChEBI" id="CHEBI:30616"/>
    </ligand>
</feature>
<evidence type="ECO:0000250" key="1"/>
<evidence type="ECO:0000250" key="2">
    <source>
        <dbReference type="UniProtKB" id="P46889"/>
    </source>
</evidence>
<evidence type="ECO:0000255" key="3">
    <source>
        <dbReference type="PROSITE-ProRule" id="PRU00289"/>
    </source>
</evidence>
<evidence type="ECO:0000256" key="4">
    <source>
        <dbReference type="SAM" id="MobiDB-lite"/>
    </source>
</evidence>
<evidence type="ECO:0000305" key="5"/>
<gene>
    <name type="primary">ftsK</name>
    <name type="ordered locus">c1027</name>
</gene>
<comment type="function">
    <text evidence="1">Essential cell division protein that coordinates cell division and chromosome segregation. The N-terminus is involved in assembly of the cell-division machinery. The C-terminus functions as a DNA motor that moves dsDNA in an ATP-dependent manner towards the dif recombination site, which is located within the replication terminus region. Translocation stops specifically at Xer-dif sites, where FtsK interacts with the Xer recombinase, allowing activation of chromosome unlinking by recombination. FtsK orienting polar sequences (KOPS) guide the direction of DNA translocation. FtsK can remove proteins from DNA as it translocates, but translocation stops specifically at XerCD-dif site, thereby preventing removal of XerC and XerD from dif (By similarity).</text>
</comment>
<comment type="subunit">
    <text evidence="1">Homohexamer. Forms a ring that surrounds DNA (By similarity).</text>
</comment>
<comment type="subcellular location">
    <subcellularLocation>
        <location evidence="1">Cell inner membrane</location>
        <topology evidence="1">Multi-pass membrane protein</topology>
    </subcellularLocation>
    <text evidence="1">Located at the septum.</text>
</comment>
<comment type="domain">
    <text evidence="1">Consists of an N-terminal domain, which is sufficient for the localization to the septal ring and is required for cell division, followed by a linker domain, and a C-terminal domain, which forms the translocation motor involved in chromosome segregation. The C-terminal domain can be further subdivided into alpha, beta and gamma subdomains. The alpha and beta subdomains multimerise to produce a hexameric ring, contain the nucleotide binding motif and form the DNA pump. The gamma subdomain is a regulatory subdomain that controls translocation of DNA by recognition of KOPS motifs and interacts with XerD recombinase (By similarity).</text>
</comment>
<comment type="similarity">
    <text evidence="5">Belongs to the FtsK/SpoIIIE/SftA family.</text>
</comment>
<name>FTSK_ECOL6</name>
<organism>
    <name type="scientific">Escherichia coli O6:H1 (strain CFT073 / ATCC 700928 / UPEC)</name>
    <dbReference type="NCBI Taxonomy" id="199310"/>
    <lineage>
        <taxon>Bacteria</taxon>
        <taxon>Pseudomonadati</taxon>
        <taxon>Pseudomonadota</taxon>
        <taxon>Gammaproteobacteria</taxon>
        <taxon>Enterobacterales</taxon>
        <taxon>Enterobacteriaceae</taxon>
        <taxon>Escherichia</taxon>
    </lineage>
</organism>
<dbReference type="EMBL" id="AE014075">
    <property type="protein sequence ID" value="AAN79499.1"/>
    <property type="molecule type" value="Genomic_DNA"/>
</dbReference>
<dbReference type="RefSeq" id="WP_000077100.1">
    <property type="nucleotide sequence ID" value="NZ_CP051263.1"/>
</dbReference>
<dbReference type="SMR" id="Q8FJC7"/>
<dbReference type="STRING" id="199310.c1027"/>
<dbReference type="KEGG" id="ecc:c1027"/>
<dbReference type="eggNOG" id="COG1178">
    <property type="taxonomic scope" value="Bacteria"/>
</dbReference>
<dbReference type="eggNOG" id="COG1674">
    <property type="taxonomic scope" value="Bacteria"/>
</dbReference>
<dbReference type="HOGENOM" id="CLU_001981_0_1_6"/>
<dbReference type="BioCyc" id="ECOL199310:C1027-MONOMER"/>
<dbReference type="Proteomes" id="UP000001410">
    <property type="component" value="Chromosome"/>
</dbReference>
<dbReference type="GO" id="GO:0005886">
    <property type="term" value="C:plasma membrane"/>
    <property type="evidence" value="ECO:0007669"/>
    <property type="project" value="UniProtKB-SubCell"/>
</dbReference>
<dbReference type="GO" id="GO:0005524">
    <property type="term" value="F:ATP binding"/>
    <property type="evidence" value="ECO:0007669"/>
    <property type="project" value="UniProtKB-KW"/>
</dbReference>
<dbReference type="GO" id="GO:0003677">
    <property type="term" value="F:DNA binding"/>
    <property type="evidence" value="ECO:0007669"/>
    <property type="project" value="UniProtKB-KW"/>
</dbReference>
<dbReference type="GO" id="GO:0051301">
    <property type="term" value="P:cell division"/>
    <property type="evidence" value="ECO:0007669"/>
    <property type="project" value="UniProtKB-KW"/>
</dbReference>
<dbReference type="GO" id="GO:0007059">
    <property type="term" value="P:chromosome segregation"/>
    <property type="evidence" value="ECO:0007669"/>
    <property type="project" value="UniProtKB-KW"/>
</dbReference>
<dbReference type="CDD" id="cd01127">
    <property type="entry name" value="TrwB_TraG_TraD_VirD4"/>
    <property type="match status" value="1"/>
</dbReference>
<dbReference type="FunFam" id="3.40.50.300:FF:000209">
    <property type="entry name" value="Cell division protein FtsK"/>
    <property type="match status" value="1"/>
</dbReference>
<dbReference type="FunFam" id="1.10.10.10:FF:000268">
    <property type="entry name" value="DNA translocase FtsK"/>
    <property type="match status" value="1"/>
</dbReference>
<dbReference type="FunFam" id="3.30.980.40:FF:000001">
    <property type="entry name" value="DNA translocase FtsK"/>
    <property type="match status" value="1"/>
</dbReference>
<dbReference type="Gene3D" id="3.30.980.40">
    <property type="match status" value="1"/>
</dbReference>
<dbReference type="Gene3D" id="3.40.50.300">
    <property type="entry name" value="P-loop containing nucleotide triphosphate hydrolases"/>
    <property type="match status" value="1"/>
</dbReference>
<dbReference type="Gene3D" id="1.10.10.10">
    <property type="entry name" value="Winged helix-like DNA-binding domain superfamily/Winged helix DNA-binding domain"/>
    <property type="match status" value="1"/>
</dbReference>
<dbReference type="InterPro" id="IPR050206">
    <property type="entry name" value="FtsK/SpoIIIE/SftA"/>
</dbReference>
<dbReference type="InterPro" id="IPR025199">
    <property type="entry name" value="FtsK_4TM"/>
</dbReference>
<dbReference type="InterPro" id="IPR041027">
    <property type="entry name" value="FtsK_alpha"/>
</dbReference>
<dbReference type="InterPro" id="IPR002543">
    <property type="entry name" value="FtsK_dom"/>
</dbReference>
<dbReference type="InterPro" id="IPR018541">
    <property type="entry name" value="Ftsk_gamma"/>
</dbReference>
<dbReference type="InterPro" id="IPR027417">
    <property type="entry name" value="P-loop_NTPase"/>
</dbReference>
<dbReference type="InterPro" id="IPR036388">
    <property type="entry name" value="WH-like_DNA-bd_sf"/>
</dbReference>
<dbReference type="InterPro" id="IPR036390">
    <property type="entry name" value="WH_DNA-bd_sf"/>
</dbReference>
<dbReference type="NCBIfam" id="NF007615">
    <property type="entry name" value="PRK10263.1"/>
    <property type="match status" value="1"/>
</dbReference>
<dbReference type="PANTHER" id="PTHR22683:SF41">
    <property type="entry name" value="DNA TRANSLOCASE FTSK"/>
    <property type="match status" value="1"/>
</dbReference>
<dbReference type="PANTHER" id="PTHR22683">
    <property type="entry name" value="SPORULATION PROTEIN RELATED"/>
    <property type="match status" value="1"/>
</dbReference>
<dbReference type="Pfam" id="PF13491">
    <property type="entry name" value="FtsK_4TM"/>
    <property type="match status" value="1"/>
</dbReference>
<dbReference type="Pfam" id="PF17854">
    <property type="entry name" value="FtsK_alpha"/>
    <property type="match status" value="1"/>
</dbReference>
<dbReference type="Pfam" id="PF09397">
    <property type="entry name" value="FtsK_gamma"/>
    <property type="match status" value="1"/>
</dbReference>
<dbReference type="Pfam" id="PF01580">
    <property type="entry name" value="FtsK_SpoIIIE"/>
    <property type="match status" value="1"/>
</dbReference>
<dbReference type="SMART" id="SM00843">
    <property type="entry name" value="Ftsk_gamma"/>
    <property type="match status" value="1"/>
</dbReference>
<dbReference type="SUPFAM" id="SSF52540">
    <property type="entry name" value="P-loop containing nucleoside triphosphate hydrolases"/>
    <property type="match status" value="1"/>
</dbReference>
<dbReference type="SUPFAM" id="SSF46785">
    <property type="entry name" value="Winged helix' DNA-binding domain"/>
    <property type="match status" value="1"/>
</dbReference>
<dbReference type="PROSITE" id="PS50901">
    <property type="entry name" value="FTSK"/>
    <property type="match status" value="1"/>
</dbReference>
<protein>
    <recommendedName>
        <fullName>DNA translocase FtsK</fullName>
    </recommendedName>
</protein>
<accession>Q8FJC7</accession>
<sequence>MSQEYTEDKEVTLTKLSSGRRLLEALLILIVLFAVWLMAALLSFNPSDPSWSQTAWHEPIHNLGGMPGAWLADTLFFIFGVMAYTIPVIIVGGCWFAWRHQSSDEYIDYFAVSLRIIGVLALILTSCGLAAINADDIWYFASGGVIGSLLSTTLQPLLHSSGGTIALLCVWAAGLTLFTGWSWVTIAEKLGGWILNILTFASNRTRRDDTWVDEDEYEDDEEYEDENHGKQHESRRARILRGALARRKRLAEKFINPMGRQTDAALFSGKRMDDEEEITYTARGVAADPDDVLFSGNRATQPEYDEYDPLLNGAPITEPVAVAAAATTATQSWAAPVEPVTQTPPVASVDVPPTQPTVAWQPVPGPQTGEPVIAPAPEGYPHQSQYAQPAVQYNEPLQQPVQPQQPYYAPAAEQPVQQPYYAPAAEQPVQQPYYAPAPEQPVAGNAWQAEEQQSTFAPQSTYQTEQTYQQPAAQEPLYQQPQPVEQQPVVEPEPVVEETKPTRPPLYYFEEVEEKRAREREQLAAWYQPIPEPVKEPEPIKSSLKAPSVAAVPPVEAAAAVSPLASGVKKATLATGAAATVAAPVFSLANSGGPRPQVKEGIGPQLPRPKRIRVPTRRELASYGIKLPSQRAAEEKAREAQRNQYDSGDQYNDDEIDAMQQDELARQFAQTQQQRYGEQYQHDVPVNTEDADAAAEAELARQFAQTQQQRYSGEQPAGANPFSLDDFEFSPMKALLDDGPHEPLFTPIVEPVQQPQQPVAPQQQYQQPQQPVAPQPQYQQPQQPVAPQPQYQQPQYQQPQQPVAPQQQYQQPQQPVTQQPQYQQPQQPVVPQPQDTLLHPLLMRNGDSRPLHKPTTPLPSLDLLTPPPSEVEPVDTFALEQMARLVEARLADFRIKADVVNYSPGPVITRFELNLAPGVKAARISNLSRDLARSLSTVAVRVVEVIPGKPYVGLELPNKKRQTVYLREVLDNAKFRDNPSPLTVVLGKDIAGEPVVADLAKMPHLLVAGTTGSGKSVGVNAMILSMLYKAQPEDVRFIMIDPKMLELSVYEGIPHLLTEVVTDMKDAANALRWCVNEMERRYKLMSALGVRNLAGYNEKIAEADRMMRPIPDPYWKPGDSMDAQHPVLKKEPYIVVLVDEFADLMMTVGKKVEELIARLAQKARAAGIHLVLATQRPSVDVITGLIKANIPTRIAFTVSSKIDSRTILDQAGAESLLGMGDMLYSGPNSTLPVRVHGAFVRDQEVHAVVQDWKARGRPQYVDGITSDSESEGGVGGFDGAEELDPLFDQAVQFVTEKRKASISGVQRQFRIGYNRAARIIEQMEAQGIVSEQGHNGNREVLAPPPFD</sequence>
<proteinExistence type="inferred from homology"/>
<reference key="1">
    <citation type="journal article" date="2002" name="Proc. Natl. Acad. Sci. U.S.A.">
        <title>Extensive mosaic structure revealed by the complete genome sequence of uropathogenic Escherichia coli.</title>
        <authorList>
            <person name="Welch R.A."/>
            <person name="Burland V."/>
            <person name="Plunkett G. III"/>
            <person name="Redford P."/>
            <person name="Roesch P."/>
            <person name="Rasko D."/>
            <person name="Buckles E.L."/>
            <person name="Liou S.-R."/>
            <person name="Boutin A."/>
            <person name="Hackett J."/>
            <person name="Stroud D."/>
            <person name="Mayhew G.F."/>
            <person name="Rose D.J."/>
            <person name="Zhou S."/>
            <person name="Schwartz D.C."/>
            <person name="Perna N.T."/>
            <person name="Mobley H.L.T."/>
            <person name="Donnenberg M.S."/>
            <person name="Blattner F.R."/>
        </authorList>
    </citation>
    <scope>NUCLEOTIDE SEQUENCE [LARGE SCALE GENOMIC DNA]</scope>
    <source>
        <strain>CFT073 / ATCC 700928 / UPEC</strain>
    </source>
</reference>